<name>RNH2_BORHD</name>
<keyword id="KW-0963">Cytoplasm</keyword>
<keyword id="KW-0255">Endonuclease</keyword>
<keyword id="KW-0378">Hydrolase</keyword>
<keyword id="KW-0464">Manganese</keyword>
<keyword id="KW-0479">Metal-binding</keyword>
<keyword id="KW-0540">Nuclease</keyword>
<protein>
    <recommendedName>
        <fullName evidence="1">Ribonuclease HII</fullName>
        <shortName evidence="1">RNase HII</shortName>
        <ecNumber evidence="1">3.1.26.4</ecNumber>
    </recommendedName>
</protein>
<gene>
    <name evidence="1" type="primary">rnhB</name>
    <name type="ordered locus">BH0046</name>
</gene>
<organism>
    <name type="scientific">Borrelia hermsii (strain HS1 / DAH)</name>
    <dbReference type="NCBI Taxonomy" id="314723"/>
    <lineage>
        <taxon>Bacteria</taxon>
        <taxon>Pseudomonadati</taxon>
        <taxon>Spirochaetota</taxon>
        <taxon>Spirochaetia</taxon>
        <taxon>Spirochaetales</taxon>
        <taxon>Borreliaceae</taxon>
        <taxon>Borrelia</taxon>
    </lineage>
</organism>
<feature type="chain" id="PRO_1000091607" description="Ribonuclease HII">
    <location>
        <begin position="1"/>
        <end position="181"/>
    </location>
</feature>
<feature type="domain" description="RNase H type-2" evidence="2">
    <location>
        <begin position="1"/>
        <end position="181"/>
    </location>
</feature>
<feature type="binding site" evidence="1">
    <location>
        <position position="6"/>
    </location>
    <ligand>
        <name>a divalent metal cation</name>
        <dbReference type="ChEBI" id="CHEBI:60240"/>
    </ligand>
</feature>
<feature type="binding site" evidence="1">
    <location>
        <position position="7"/>
    </location>
    <ligand>
        <name>a divalent metal cation</name>
        <dbReference type="ChEBI" id="CHEBI:60240"/>
    </ligand>
</feature>
<feature type="binding site" evidence="1">
    <location>
        <position position="98"/>
    </location>
    <ligand>
        <name>a divalent metal cation</name>
        <dbReference type="ChEBI" id="CHEBI:60240"/>
    </ligand>
</feature>
<reference key="1">
    <citation type="submission" date="2004-12" db="EMBL/GenBank/DDBJ databases">
        <title>The genome sequence of Borrelia hermsii and Borrelia turicatae: comparative analysis of two agents of endemic N. America relapsing fever.</title>
        <authorList>
            <person name="Porcella S.F."/>
            <person name="Raffel S.J."/>
            <person name="Schrumpf M.E."/>
            <person name="Montgomery B."/>
            <person name="Smith T."/>
            <person name="Schwan T.G."/>
        </authorList>
    </citation>
    <scope>NUCLEOTIDE SEQUENCE [LARGE SCALE GENOMIC DNA]</scope>
    <source>
        <strain>HS1 / DAH</strain>
    </source>
</reference>
<comment type="function">
    <text evidence="1">Endonuclease that specifically degrades the RNA of RNA-DNA hybrids.</text>
</comment>
<comment type="catalytic activity">
    <reaction evidence="1">
        <text>Endonucleolytic cleavage to 5'-phosphomonoester.</text>
        <dbReference type="EC" id="3.1.26.4"/>
    </reaction>
</comment>
<comment type="cofactor">
    <cofactor evidence="1">
        <name>Mn(2+)</name>
        <dbReference type="ChEBI" id="CHEBI:29035"/>
    </cofactor>
    <cofactor evidence="1">
        <name>Mg(2+)</name>
        <dbReference type="ChEBI" id="CHEBI:18420"/>
    </cofactor>
    <text evidence="1">Manganese or magnesium. Binds 1 divalent metal ion per monomer in the absence of substrate. May bind a second metal ion after substrate binding.</text>
</comment>
<comment type="subcellular location">
    <subcellularLocation>
        <location evidence="1">Cytoplasm</location>
    </subcellularLocation>
</comment>
<comment type="similarity">
    <text evidence="1">Belongs to the RNase HII family.</text>
</comment>
<proteinExistence type="inferred from homology"/>
<evidence type="ECO:0000255" key="1">
    <source>
        <dbReference type="HAMAP-Rule" id="MF_00052"/>
    </source>
</evidence>
<evidence type="ECO:0000255" key="2">
    <source>
        <dbReference type="PROSITE-ProRule" id="PRU01319"/>
    </source>
</evidence>
<accession>B2S1N3</accession>
<sequence length="181" mass="20498">MICGIDEVGRGCIFGPVLSAAVIFKGNPNFLNELDDSKKLKKAKREYLSSLILENSYYAFAEVSNETIDKINIHHASLLAMQIAYEKLDINCDLVLVDGKFIPKIKAKKIQAIIKGDSIINEIKAASIIAKVQRDKLMDEYNKIYPLYALNKNKGYPTKEHKEAIKKHGISNLHRRSFKFI</sequence>
<dbReference type="EC" id="3.1.26.4" evidence="1"/>
<dbReference type="EMBL" id="CP000048">
    <property type="protein sequence ID" value="AAX16570.1"/>
    <property type="molecule type" value="Genomic_DNA"/>
</dbReference>
<dbReference type="RefSeq" id="WP_012421827.1">
    <property type="nucleotide sequence ID" value="NZ_CP073136.1"/>
</dbReference>
<dbReference type="SMR" id="B2S1N3"/>
<dbReference type="KEGG" id="bhr:BH0046"/>
<dbReference type="HOGENOM" id="CLU_036532_3_2_12"/>
<dbReference type="Proteomes" id="UP000008834">
    <property type="component" value="Chromosome"/>
</dbReference>
<dbReference type="GO" id="GO:0005737">
    <property type="term" value="C:cytoplasm"/>
    <property type="evidence" value="ECO:0007669"/>
    <property type="project" value="UniProtKB-SubCell"/>
</dbReference>
<dbReference type="GO" id="GO:0032299">
    <property type="term" value="C:ribonuclease H2 complex"/>
    <property type="evidence" value="ECO:0007669"/>
    <property type="project" value="TreeGrafter"/>
</dbReference>
<dbReference type="GO" id="GO:0030145">
    <property type="term" value="F:manganese ion binding"/>
    <property type="evidence" value="ECO:0007669"/>
    <property type="project" value="UniProtKB-UniRule"/>
</dbReference>
<dbReference type="GO" id="GO:0003723">
    <property type="term" value="F:RNA binding"/>
    <property type="evidence" value="ECO:0007669"/>
    <property type="project" value="InterPro"/>
</dbReference>
<dbReference type="GO" id="GO:0004523">
    <property type="term" value="F:RNA-DNA hybrid ribonuclease activity"/>
    <property type="evidence" value="ECO:0007669"/>
    <property type="project" value="UniProtKB-UniRule"/>
</dbReference>
<dbReference type="GO" id="GO:0043137">
    <property type="term" value="P:DNA replication, removal of RNA primer"/>
    <property type="evidence" value="ECO:0007669"/>
    <property type="project" value="TreeGrafter"/>
</dbReference>
<dbReference type="GO" id="GO:0006298">
    <property type="term" value="P:mismatch repair"/>
    <property type="evidence" value="ECO:0007669"/>
    <property type="project" value="TreeGrafter"/>
</dbReference>
<dbReference type="CDD" id="cd07182">
    <property type="entry name" value="RNase_HII_bacteria_HII_like"/>
    <property type="match status" value="1"/>
</dbReference>
<dbReference type="Gene3D" id="3.30.420.10">
    <property type="entry name" value="Ribonuclease H-like superfamily/Ribonuclease H"/>
    <property type="match status" value="1"/>
</dbReference>
<dbReference type="HAMAP" id="MF_00052_B">
    <property type="entry name" value="RNase_HII_B"/>
    <property type="match status" value="1"/>
</dbReference>
<dbReference type="InterPro" id="IPR022898">
    <property type="entry name" value="RNase_HII"/>
</dbReference>
<dbReference type="InterPro" id="IPR001352">
    <property type="entry name" value="RNase_HII/HIII"/>
</dbReference>
<dbReference type="InterPro" id="IPR024567">
    <property type="entry name" value="RNase_HII/HIII_dom"/>
</dbReference>
<dbReference type="InterPro" id="IPR012337">
    <property type="entry name" value="RNaseH-like_sf"/>
</dbReference>
<dbReference type="InterPro" id="IPR036397">
    <property type="entry name" value="RNaseH_sf"/>
</dbReference>
<dbReference type="NCBIfam" id="NF000595">
    <property type="entry name" value="PRK00015.1-3"/>
    <property type="match status" value="1"/>
</dbReference>
<dbReference type="PANTHER" id="PTHR10954:SF23">
    <property type="entry name" value="RIBONUCLEASE"/>
    <property type="match status" value="1"/>
</dbReference>
<dbReference type="PANTHER" id="PTHR10954">
    <property type="entry name" value="RIBONUCLEASE H2 SUBUNIT A"/>
    <property type="match status" value="1"/>
</dbReference>
<dbReference type="Pfam" id="PF01351">
    <property type="entry name" value="RNase_HII"/>
    <property type="match status" value="1"/>
</dbReference>
<dbReference type="SUPFAM" id="SSF53098">
    <property type="entry name" value="Ribonuclease H-like"/>
    <property type="match status" value="1"/>
</dbReference>
<dbReference type="PROSITE" id="PS51975">
    <property type="entry name" value="RNASE_H_2"/>
    <property type="match status" value="1"/>
</dbReference>